<accession>A5IM91</accession>
<name>RL29_THEP1</name>
<comment type="similarity">
    <text evidence="1">Belongs to the universal ribosomal protein uL29 family.</text>
</comment>
<sequence length="66" mass="7972">MKASELRNYTDEELKNLLEEKKRQLMELRFQLAMGQLKNTSLIKLTKRDIARIKTILRERELGIRR</sequence>
<evidence type="ECO:0000255" key="1">
    <source>
        <dbReference type="HAMAP-Rule" id="MF_00374"/>
    </source>
</evidence>
<evidence type="ECO:0000305" key="2"/>
<feature type="chain" id="PRO_1000007646" description="Large ribosomal subunit protein uL29">
    <location>
        <begin position="1"/>
        <end position="66"/>
    </location>
</feature>
<dbReference type="EMBL" id="CP000702">
    <property type="protein sequence ID" value="ABQ47314.1"/>
    <property type="molecule type" value="Genomic_DNA"/>
</dbReference>
<dbReference type="RefSeq" id="WP_004081820.1">
    <property type="nucleotide sequence ID" value="NC_009486.1"/>
</dbReference>
<dbReference type="BMRB" id="A5IM91"/>
<dbReference type="SMR" id="A5IM91"/>
<dbReference type="STRING" id="390874.Tpet_1300"/>
<dbReference type="KEGG" id="tpt:Tpet_1300"/>
<dbReference type="eggNOG" id="COG0255">
    <property type="taxonomic scope" value="Bacteria"/>
</dbReference>
<dbReference type="HOGENOM" id="CLU_158491_5_2_0"/>
<dbReference type="Proteomes" id="UP000006558">
    <property type="component" value="Chromosome"/>
</dbReference>
<dbReference type="GO" id="GO:0022625">
    <property type="term" value="C:cytosolic large ribosomal subunit"/>
    <property type="evidence" value="ECO:0007669"/>
    <property type="project" value="TreeGrafter"/>
</dbReference>
<dbReference type="GO" id="GO:0003735">
    <property type="term" value="F:structural constituent of ribosome"/>
    <property type="evidence" value="ECO:0007669"/>
    <property type="project" value="InterPro"/>
</dbReference>
<dbReference type="GO" id="GO:0006412">
    <property type="term" value="P:translation"/>
    <property type="evidence" value="ECO:0007669"/>
    <property type="project" value="UniProtKB-UniRule"/>
</dbReference>
<dbReference type="CDD" id="cd00427">
    <property type="entry name" value="Ribosomal_L29_HIP"/>
    <property type="match status" value="1"/>
</dbReference>
<dbReference type="FunFam" id="1.10.287.310:FF:000001">
    <property type="entry name" value="50S ribosomal protein L29"/>
    <property type="match status" value="1"/>
</dbReference>
<dbReference type="Gene3D" id="1.10.287.310">
    <property type="match status" value="1"/>
</dbReference>
<dbReference type="HAMAP" id="MF_00374">
    <property type="entry name" value="Ribosomal_uL29"/>
    <property type="match status" value="1"/>
</dbReference>
<dbReference type="InterPro" id="IPR050063">
    <property type="entry name" value="Ribosomal_protein_uL29"/>
</dbReference>
<dbReference type="InterPro" id="IPR001854">
    <property type="entry name" value="Ribosomal_uL29"/>
</dbReference>
<dbReference type="InterPro" id="IPR018254">
    <property type="entry name" value="Ribosomal_uL29_CS"/>
</dbReference>
<dbReference type="InterPro" id="IPR036049">
    <property type="entry name" value="Ribosomal_uL29_sf"/>
</dbReference>
<dbReference type="NCBIfam" id="TIGR00012">
    <property type="entry name" value="L29"/>
    <property type="match status" value="1"/>
</dbReference>
<dbReference type="PANTHER" id="PTHR10916">
    <property type="entry name" value="60S RIBOSOMAL PROTEIN L35/50S RIBOSOMAL PROTEIN L29"/>
    <property type="match status" value="1"/>
</dbReference>
<dbReference type="PANTHER" id="PTHR10916:SF0">
    <property type="entry name" value="LARGE RIBOSOMAL SUBUNIT PROTEIN UL29C"/>
    <property type="match status" value="1"/>
</dbReference>
<dbReference type="Pfam" id="PF00831">
    <property type="entry name" value="Ribosomal_L29"/>
    <property type="match status" value="1"/>
</dbReference>
<dbReference type="SUPFAM" id="SSF46561">
    <property type="entry name" value="Ribosomal protein L29 (L29p)"/>
    <property type="match status" value="1"/>
</dbReference>
<dbReference type="PROSITE" id="PS00579">
    <property type="entry name" value="RIBOSOMAL_L29"/>
    <property type="match status" value="1"/>
</dbReference>
<keyword id="KW-0687">Ribonucleoprotein</keyword>
<keyword id="KW-0689">Ribosomal protein</keyword>
<reference key="1">
    <citation type="submission" date="2007-05" db="EMBL/GenBank/DDBJ databases">
        <title>Complete sequence of Thermotoga petrophila RKU-1.</title>
        <authorList>
            <consortium name="US DOE Joint Genome Institute"/>
            <person name="Copeland A."/>
            <person name="Lucas S."/>
            <person name="Lapidus A."/>
            <person name="Barry K."/>
            <person name="Glavina del Rio T."/>
            <person name="Dalin E."/>
            <person name="Tice H."/>
            <person name="Pitluck S."/>
            <person name="Sims D."/>
            <person name="Brettin T."/>
            <person name="Bruce D."/>
            <person name="Detter J.C."/>
            <person name="Han C."/>
            <person name="Tapia R."/>
            <person name="Schmutz J."/>
            <person name="Larimer F."/>
            <person name="Land M."/>
            <person name="Hauser L."/>
            <person name="Kyrpides N."/>
            <person name="Mikhailova N."/>
            <person name="Nelson K."/>
            <person name="Gogarten J.P."/>
            <person name="Noll K."/>
            <person name="Richardson P."/>
        </authorList>
    </citation>
    <scope>NUCLEOTIDE SEQUENCE [LARGE SCALE GENOMIC DNA]</scope>
    <source>
        <strain>ATCC BAA-488 / DSM 13995 / JCM 10881 / RKU-1</strain>
    </source>
</reference>
<organism>
    <name type="scientific">Thermotoga petrophila (strain ATCC BAA-488 / DSM 13995 / JCM 10881 / RKU-1)</name>
    <dbReference type="NCBI Taxonomy" id="390874"/>
    <lineage>
        <taxon>Bacteria</taxon>
        <taxon>Thermotogati</taxon>
        <taxon>Thermotogota</taxon>
        <taxon>Thermotogae</taxon>
        <taxon>Thermotogales</taxon>
        <taxon>Thermotogaceae</taxon>
        <taxon>Thermotoga</taxon>
    </lineage>
</organism>
<gene>
    <name evidence="1" type="primary">rpmC</name>
    <name type="ordered locus">Tpet_1300</name>
</gene>
<protein>
    <recommendedName>
        <fullName evidence="1">Large ribosomal subunit protein uL29</fullName>
    </recommendedName>
    <alternativeName>
        <fullName evidence="2">50S ribosomal protein L29</fullName>
    </alternativeName>
</protein>
<proteinExistence type="inferred from homology"/>